<sequence>MTDNPWLIMMINMTIVFGVLIVLGILMVLIHAVDPTKKVQGKKKPVVAKPAPSAAASKRQEEEKVAAMAAVLALVQDEDDMIAAALSAAIAEHKRKMEPMNLPHHSF</sequence>
<organism>
    <name type="scientific">Acidaminococcus fermentans (strain ATCC 25085 / DSM 20731 / CCUG 9996 / CIP 106432 / VR4)</name>
    <dbReference type="NCBI Taxonomy" id="591001"/>
    <lineage>
        <taxon>Bacteria</taxon>
        <taxon>Bacillati</taxon>
        <taxon>Bacillota</taxon>
        <taxon>Negativicutes</taxon>
        <taxon>Acidaminococcales</taxon>
        <taxon>Acidaminococcaceae</taxon>
        <taxon>Acidaminococcus</taxon>
    </lineage>
</organism>
<protein>
    <recommendedName>
        <fullName>Glutaconyl-CoA decarboxylase subunit delta</fullName>
        <ecNumber>7.2.4.5</ecNumber>
    </recommendedName>
</protein>
<keyword id="KW-1003">Cell membrane</keyword>
<keyword id="KW-0210">Decarboxylase</keyword>
<keyword id="KW-0406">Ion transport</keyword>
<keyword id="KW-0456">Lyase</keyword>
<keyword id="KW-0472">Membrane</keyword>
<keyword id="KW-1185">Reference proteome</keyword>
<keyword id="KW-0915">Sodium</keyword>
<keyword id="KW-0739">Sodium transport</keyword>
<keyword id="KW-1278">Translocase</keyword>
<keyword id="KW-0812">Transmembrane</keyword>
<keyword id="KW-1133">Transmembrane helix</keyword>
<keyword id="KW-0813">Transport</keyword>
<dbReference type="EC" id="7.2.4.5"/>
<dbReference type="EMBL" id="AF030576">
    <property type="protein sequence ID" value="AAC69171.1"/>
    <property type="molecule type" value="Genomic_DNA"/>
</dbReference>
<dbReference type="EMBL" id="CP001859">
    <property type="protein sequence ID" value="ADB48190.1"/>
    <property type="molecule type" value="Genomic_DNA"/>
</dbReference>
<dbReference type="RefSeq" id="WP_012939173.1">
    <property type="nucleotide sequence ID" value="NC_013740.1"/>
</dbReference>
<dbReference type="SMR" id="Q9ZAA8"/>
<dbReference type="STRING" id="591001.Acfer_1836"/>
<dbReference type="TCDB" id="3.B.1.1.3">
    <property type="family name" value="the na(+)-transporting carboxylic acid decarboxylase (nat-dc) family"/>
</dbReference>
<dbReference type="GeneID" id="78335532"/>
<dbReference type="KEGG" id="afn:Acfer_1836"/>
<dbReference type="HOGENOM" id="CLU_170325_0_0_9"/>
<dbReference type="BioCyc" id="MetaCyc:MONOMER-1057"/>
<dbReference type="BRENDA" id="7.2.4.5">
    <property type="organism ID" value="85"/>
</dbReference>
<dbReference type="SABIO-RK" id="Q9ZAA8"/>
<dbReference type="UniPathway" id="UPA00533">
    <property type="reaction ID" value="UER00688"/>
</dbReference>
<dbReference type="Proteomes" id="UP000001902">
    <property type="component" value="Chromosome"/>
</dbReference>
<dbReference type="GO" id="GO:0005886">
    <property type="term" value="C:plasma membrane"/>
    <property type="evidence" value="ECO:0007669"/>
    <property type="project" value="UniProtKB-SubCell"/>
</dbReference>
<dbReference type="GO" id="GO:0018801">
    <property type="term" value="F:glutaconyl-CoA decarboxylase activity"/>
    <property type="evidence" value="ECO:0007669"/>
    <property type="project" value="UniProtKB-EC"/>
</dbReference>
<dbReference type="GO" id="GO:0015081">
    <property type="term" value="F:sodium ion transmembrane transporter activity"/>
    <property type="evidence" value="ECO:0007669"/>
    <property type="project" value="InterPro"/>
</dbReference>
<dbReference type="GO" id="GO:0019552">
    <property type="term" value="P:glutamate catabolic process via 2-hydroxyglutarate"/>
    <property type="evidence" value="ECO:0007669"/>
    <property type="project" value="UniProtKB-UniPathway"/>
</dbReference>
<dbReference type="GO" id="GO:0036376">
    <property type="term" value="P:sodium ion export across plasma membrane"/>
    <property type="evidence" value="ECO:0007669"/>
    <property type="project" value="InterPro"/>
</dbReference>
<dbReference type="InterPro" id="IPR005899">
    <property type="entry name" value="Na_pump_deCOase"/>
</dbReference>
<dbReference type="NCBIfam" id="TIGR01195">
    <property type="entry name" value="oadG_fam"/>
    <property type="match status" value="1"/>
</dbReference>
<dbReference type="Pfam" id="PF04277">
    <property type="entry name" value="OAD_gamma"/>
    <property type="match status" value="1"/>
</dbReference>
<reference key="1">
    <citation type="journal article" date="1999" name="Mol. Microbiol.">
        <title>The sodium ion translocating glutaconyl-CoA decarboxylase from Acidaminococcus fermentans: cloning and function of the genes forming a second operon.</title>
        <authorList>
            <person name="Braune A."/>
            <person name="Bendrat K."/>
            <person name="Rospert S."/>
            <person name="Buckel W."/>
        </authorList>
    </citation>
    <scope>NUCLEOTIDE SEQUENCE [GENOMIC DNA]</scope>
</reference>
<reference key="2">
    <citation type="journal article" date="2010" name="Stand. Genomic Sci.">
        <title>Complete genome sequence of Acidaminococcus fermentans type strain (VR4).</title>
        <authorList>
            <person name="Chang Y.J."/>
            <person name="Pukall R."/>
            <person name="Saunders E."/>
            <person name="Lapidus A."/>
            <person name="Copeland A."/>
            <person name="Nolan M."/>
            <person name="Glavina Del Rio T."/>
            <person name="Lucas S."/>
            <person name="Chen F."/>
            <person name="Tice H."/>
            <person name="Cheng J.F."/>
            <person name="Han C."/>
            <person name="Detter J.C."/>
            <person name="Bruce D."/>
            <person name="Goodwin L."/>
            <person name="Pitluck S."/>
            <person name="Mikhailova N."/>
            <person name="Liolios K."/>
            <person name="Pati A."/>
            <person name="Ivanova N."/>
            <person name="Mavromatis K."/>
            <person name="Chen A."/>
            <person name="Palaniappan K."/>
            <person name="Land M."/>
            <person name="Hauser L."/>
            <person name="Jeffries C.D."/>
            <person name="Brettin T."/>
            <person name="Rohde M."/>
            <person name="Goker M."/>
            <person name="Bristow J."/>
            <person name="Eisen J.A."/>
            <person name="Markowitz V."/>
            <person name="Hugenholtz P."/>
            <person name="Kyrpides N.C."/>
            <person name="Klenk H.P."/>
        </authorList>
    </citation>
    <scope>NUCLEOTIDE SEQUENCE [LARGE SCALE GENOMIC DNA]</scope>
    <source>
        <strain>ATCC 25085 / DSM 20731 / CCUG 9996 / CIP 106432 / VR4</strain>
    </source>
</reference>
<name>GCDD_ACIFV</name>
<gene>
    <name type="primary">gcdD</name>
    <name type="ordered locus">Acfer_1836</name>
</gene>
<comment type="function">
    <text>Part of the primary sodium pump glutaconyl-CoA decarboxylase (GCD). Possible membrane anchor for the alpha subunit.</text>
</comment>
<comment type="catalytic activity">
    <reaction>
        <text>(2E)-glutaconyl-CoA + Na(+)(in) + H(+) = (2E)-butenoyl-CoA + Na(+)(out) + CO2</text>
        <dbReference type="Rhea" id="RHEA:23972"/>
        <dbReference type="ChEBI" id="CHEBI:15378"/>
        <dbReference type="ChEBI" id="CHEBI:16526"/>
        <dbReference type="ChEBI" id="CHEBI:29101"/>
        <dbReference type="ChEBI" id="CHEBI:57332"/>
        <dbReference type="ChEBI" id="CHEBI:57353"/>
        <dbReference type="EC" id="7.2.4.5"/>
    </reaction>
</comment>
<comment type="pathway">
    <text>Amino-acid degradation; L-glutamate degradation via hydroxyglutarate pathway; crotonoyl-CoA from L-glutamate: step 5/5.</text>
</comment>
<comment type="subunit">
    <text>Heterooctamer consisting of two alpha, two beta, two gamma and two delta subunits.</text>
</comment>
<comment type="subcellular location">
    <subcellularLocation>
        <location evidence="1">Cell membrane</location>
        <topology evidence="1">Single-pass membrane protein</topology>
    </subcellularLocation>
</comment>
<comment type="similarity">
    <text evidence="4">Belongs to the OadG family.</text>
</comment>
<accession>Q9ZAA8</accession>
<accession>D2RM88</accession>
<feature type="chain" id="PRO_0000216466" description="Glutaconyl-CoA decarboxylase subunit delta">
    <location>
        <begin position="1"/>
        <end position="107"/>
    </location>
</feature>
<feature type="transmembrane region" description="Helical" evidence="2">
    <location>
        <begin position="10"/>
        <end position="32"/>
    </location>
</feature>
<feature type="region of interest" description="Disordered" evidence="3">
    <location>
        <begin position="37"/>
        <end position="60"/>
    </location>
</feature>
<feature type="compositionally biased region" description="Low complexity" evidence="3">
    <location>
        <begin position="47"/>
        <end position="57"/>
    </location>
</feature>
<proteinExistence type="inferred from homology"/>
<evidence type="ECO:0000250" key="1"/>
<evidence type="ECO:0000255" key="2"/>
<evidence type="ECO:0000256" key="3">
    <source>
        <dbReference type="SAM" id="MobiDB-lite"/>
    </source>
</evidence>
<evidence type="ECO:0000305" key="4"/>